<sequence length="470" mass="51706">MRFSTLHFAFLATLSSIFTVVAASDTTTCSSSKHCPEDKPCCSQFGICGTGAYCLGGCDIRYSYNLTACMPMPRMSTFQESFDSKDKVKEIELQSDYLGNSTEADWVYTGWVDYYDNSLLIQMPNHTTGTVVSSTKYLWYGKVGATLKTSHDGGVVTAFILFSDVQDEIDYEFVGYNLTNPQSNYYSQGILNYNNSRNSSVNNTFEYYHNYEMDWTEDKIEWYIDGEKVRTLNKNDTWNETSNRYDYPQTPSRIQFSLWPGGDSSNAKGTIEWAGGLINWDSEDIKKYGYYYAHIKEIYATAYDIPNDVKLDGNSTKESDYHAFLYNSTDGDASNIMLTTKKTWLGSDDATGFDPQNDDEDSSSNKAQETTITSVSGSSTITSVKTDSTKKTANVPAQNTAAAAQATAKSSTGTNTYDPSAGVGGFVQDSKSTDSGSSGSSSQGVANSLNESVISGIFASICLGILSFFM</sequence>
<evidence type="ECO:0000250" key="1">
    <source>
        <dbReference type="UniProtKB" id="P27051"/>
    </source>
</evidence>
<evidence type="ECO:0000250" key="2">
    <source>
        <dbReference type="UniProtKB" id="Q8J0P4"/>
    </source>
</evidence>
<evidence type="ECO:0000255" key="3"/>
<evidence type="ECO:0000255" key="4">
    <source>
        <dbReference type="PROSITE-ProRule" id="PRU01098"/>
    </source>
</evidence>
<evidence type="ECO:0000256" key="5">
    <source>
        <dbReference type="SAM" id="MobiDB-lite"/>
    </source>
</evidence>
<evidence type="ECO:0000269" key="6">
    <source>
    </source>
</evidence>
<evidence type="ECO:0000269" key="7">
    <source>
    </source>
</evidence>
<evidence type="ECO:0000269" key="8">
    <source>
    </source>
</evidence>
<evidence type="ECO:0000269" key="9">
    <source>
    </source>
</evidence>
<evidence type="ECO:0000269" key="10">
    <source>
    </source>
</evidence>
<evidence type="ECO:0000269" key="11">
    <source>
    </source>
</evidence>
<evidence type="ECO:0000269" key="12">
    <source>
    </source>
</evidence>
<evidence type="ECO:0000269" key="13">
    <source>
    </source>
</evidence>
<evidence type="ECO:0000269" key="14">
    <source>
    </source>
</evidence>
<evidence type="ECO:0000269" key="15">
    <source>
    </source>
</evidence>
<evidence type="ECO:0000269" key="16">
    <source>
    </source>
</evidence>
<evidence type="ECO:0000269" key="17">
    <source>
    </source>
</evidence>
<evidence type="ECO:0000269" key="18">
    <source>
    </source>
</evidence>
<evidence type="ECO:0000269" key="19">
    <source>
    </source>
</evidence>
<evidence type="ECO:0000303" key="20">
    <source>
    </source>
</evidence>
<evidence type="ECO:0000303" key="21">
    <source>
    </source>
</evidence>
<evidence type="ECO:0000305" key="22"/>
<dbReference type="EC" id="3.2.1.14" evidence="2"/>
<dbReference type="EC" id="2.4.-.-" evidence="2"/>
<dbReference type="EMBL" id="CP017625">
    <property type="protein sequence ID" value="AOW28214.1"/>
    <property type="molecule type" value="Genomic_DNA"/>
</dbReference>
<dbReference type="RefSeq" id="XP_721748.1">
    <property type="nucleotide sequence ID" value="XM_716655.1"/>
</dbReference>
<dbReference type="SMR" id="Q5AJC0"/>
<dbReference type="BioGRID" id="1219685">
    <property type="interactions" value="2"/>
</dbReference>
<dbReference type="FunCoup" id="Q5AJC0">
    <property type="interactions" value="415"/>
</dbReference>
<dbReference type="STRING" id="237561.Q5AJC0"/>
<dbReference type="CAZy" id="CBM18">
    <property type="family name" value="Carbohydrate-Binding Module Family 18"/>
</dbReference>
<dbReference type="CAZy" id="GH16">
    <property type="family name" value="Glycoside Hydrolase Family 16"/>
</dbReference>
<dbReference type="GlyCosmos" id="Q5AJC0">
    <property type="glycosylation" value="12 sites, No reported glycans"/>
</dbReference>
<dbReference type="EnsemblFungi" id="C3_01730C_A-T">
    <property type="protein sequence ID" value="C3_01730C_A-T-p1"/>
    <property type="gene ID" value="C3_01730C_A"/>
</dbReference>
<dbReference type="GeneID" id="3636591"/>
<dbReference type="KEGG" id="cal:CAALFM_C301730CA"/>
<dbReference type="CGD" id="CAL0000175165">
    <property type="gene designation" value="UTR2"/>
</dbReference>
<dbReference type="VEuPathDB" id="FungiDB:C3_01730C_A"/>
<dbReference type="eggNOG" id="ENOG502QVQI">
    <property type="taxonomic scope" value="Eukaryota"/>
</dbReference>
<dbReference type="HOGENOM" id="CLU_040459_0_0_1"/>
<dbReference type="InParanoid" id="Q5AJC0"/>
<dbReference type="OMA" id="WNATANQ"/>
<dbReference type="OrthoDB" id="4781at2759"/>
<dbReference type="PRO" id="PR:Q5AJC0"/>
<dbReference type="Proteomes" id="UP000000559">
    <property type="component" value="Chromosome 3"/>
</dbReference>
<dbReference type="GO" id="GO:0030428">
    <property type="term" value="C:cell septum"/>
    <property type="evidence" value="ECO:0000315"/>
    <property type="project" value="CGD"/>
</dbReference>
<dbReference type="GO" id="GO:0009986">
    <property type="term" value="C:cell surface"/>
    <property type="evidence" value="ECO:0000314"/>
    <property type="project" value="CGD"/>
</dbReference>
<dbReference type="GO" id="GO:0005576">
    <property type="term" value="C:extracellular region"/>
    <property type="evidence" value="ECO:0000314"/>
    <property type="project" value="CGD"/>
</dbReference>
<dbReference type="GO" id="GO:1903561">
    <property type="term" value="C:extracellular vesicle"/>
    <property type="evidence" value="ECO:0000314"/>
    <property type="project" value="CGD"/>
</dbReference>
<dbReference type="GO" id="GO:0009277">
    <property type="term" value="C:fungal-type cell wall"/>
    <property type="evidence" value="ECO:0000314"/>
    <property type="project" value="CGD"/>
</dbReference>
<dbReference type="GO" id="GO:0030446">
    <property type="term" value="C:hyphal cell wall"/>
    <property type="evidence" value="ECO:0000314"/>
    <property type="project" value="CGD"/>
</dbReference>
<dbReference type="GO" id="GO:0005886">
    <property type="term" value="C:plasma membrane"/>
    <property type="evidence" value="ECO:0000314"/>
    <property type="project" value="CGD"/>
</dbReference>
<dbReference type="GO" id="GO:0098552">
    <property type="term" value="C:side of membrane"/>
    <property type="evidence" value="ECO:0007669"/>
    <property type="project" value="UniProtKB-KW"/>
</dbReference>
<dbReference type="GO" id="GO:0030445">
    <property type="term" value="C:yeast-form cell wall"/>
    <property type="evidence" value="ECO:0000314"/>
    <property type="project" value="CGD"/>
</dbReference>
<dbReference type="GO" id="GO:0016757">
    <property type="term" value="F:glycosyltransferase activity"/>
    <property type="evidence" value="ECO:0000318"/>
    <property type="project" value="GO_Central"/>
</dbReference>
<dbReference type="GO" id="GO:0004553">
    <property type="term" value="F:hydrolase activity, hydrolyzing O-glycosyl compounds"/>
    <property type="evidence" value="ECO:0007669"/>
    <property type="project" value="InterPro"/>
</dbReference>
<dbReference type="GO" id="GO:0044406">
    <property type="term" value="P:adhesion of symbiont to host"/>
    <property type="evidence" value="ECO:0000315"/>
    <property type="project" value="CGD"/>
</dbReference>
<dbReference type="GO" id="GO:0005975">
    <property type="term" value="P:carbohydrate metabolic process"/>
    <property type="evidence" value="ECO:0007669"/>
    <property type="project" value="InterPro"/>
</dbReference>
<dbReference type="GO" id="GO:0006030">
    <property type="term" value="P:chitin metabolic process"/>
    <property type="evidence" value="ECO:0000318"/>
    <property type="project" value="GO_Central"/>
</dbReference>
<dbReference type="GO" id="GO:0031505">
    <property type="term" value="P:fungal-type cell wall organization"/>
    <property type="evidence" value="ECO:0000315"/>
    <property type="project" value="CGD"/>
</dbReference>
<dbReference type="GO" id="GO:0070783">
    <property type="term" value="P:growth of unicellular organism as a thread of attached cells"/>
    <property type="evidence" value="ECO:0000315"/>
    <property type="project" value="CGD"/>
</dbReference>
<dbReference type="CDD" id="cd06923">
    <property type="entry name" value="ChtBD1_GH16"/>
    <property type="match status" value="1"/>
</dbReference>
<dbReference type="CDD" id="cd02183">
    <property type="entry name" value="GH16_fungal_CRH1_transglycosylase"/>
    <property type="match status" value="1"/>
</dbReference>
<dbReference type="FunFam" id="2.60.120.200:FF:000159">
    <property type="entry name" value="Glycosidase"/>
    <property type="match status" value="1"/>
</dbReference>
<dbReference type="Gene3D" id="2.60.120.200">
    <property type="match status" value="1"/>
</dbReference>
<dbReference type="InterPro" id="IPR013320">
    <property type="entry name" value="ConA-like_dom_sf"/>
</dbReference>
<dbReference type="InterPro" id="IPR000757">
    <property type="entry name" value="GH16"/>
</dbReference>
<dbReference type="InterPro" id="IPR017168">
    <property type="entry name" value="Glyco_hydro_16_CRH1_prd"/>
</dbReference>
<dbReference type="InterPro" id="IPR050546">
    <property type="entry name" value="Glycosyl_Hydrlase_16"/>
</dbReference>
<dbReference type="PANTHER" id="PTHR10963:SF22">
    <property type="entry name" value="GLYCOSIDASE CRH2-RELATED"/>
    <property type="match status" value="1"/>
</dbReference>
<dbReference type="PANTHER" id="PTHR10963">
    <property type="entry name" value="GLYCOSYL HYDROLASE-RELATED"/>
    <property type="match status" value="1"/>
</dbReference>
<dbReference type="Pfam" id="PF00722">
    <property type="entry name" value="Glyco_hydro_16"/>
    <property type="match status" value="1"/>
</dbReference>
<dbReference type="PIRSF" id="PIRSF037299">
    <property type="entry name" value="Glycosidase_CRH1_prd"/>
    <property type="match status" value="1"/>
</dbReference>
<dbReference type="SUPFAM" id="SSF49899">
    <property type="entry name" value="Concanavalin A-like lectins/glucanases"/>
    <property type="match status" value="1"/>
</dbReference>
<dbReference type="PROSITE" id="PS00026">
    <property type="entry name" value="CHIT_BIND_I_1"/>
    <property type="match status" value="1"/>
</dbReference>
<dbReference type="PROSITE" id="PS51762">
    <property type="entry name" value="GH16_2"/>
    <property type="match status" value="1"/>
</dbReference>
<reference key="1">
    <citation type="journal article" date="2004" name="Proc. Natl. Acad. Sci. U.S.A.">
        <title>The diploid genome sequence of Candida albicans.</title>
        <authorList>
            <person name="Jones T."/>
            <person name="Federspiel N.A."/>
            <person name="Chibana H."/>
            <person name="Dungan J."/>
            <person name="Kalman S."/>
            <person name="Magee B.B."/>
            <person name="Newport G."/>
            <person name="Thorstenson Y.R."/>
            <person name="Agabian N."/>
            <person name="Magee P.T."/>
            <person name="Davis R.W."/>
            <person name="Scherer S."/>
        </authorList>
    </citation>
    <scope>NUCLEOTIDE SEQUENCE [LARGE SCALE GENOMIC DNA]</scope>
    <source>
        <strain>SC5314 / ATCC MYA-2876</strain>
    </source>
</reference>
<reference key="2">
    <citation type="journal article" date="2007" name="Genome Biol.">
        <title>Assembly of the Candida albicans genome into sixteen supercontigs aligned on the eight chromosomes.</title>
        <authorList>
            <person name="van het Hoog M."/>
            <person name="Rast T.J."/>
            <person name="Martchenko M."/>
            <person name="Grindle S."/>
            <person name="Dignard D."/>
            <person name="Hogues H."/>
            <person name="Cuomo C."/>
            <person name="Berriman M."/>
            <person name="Scherer S."/>
            <person name="Magee B.B."/>
            <person name="Whiteway M."/>
            <person name="Chibana H."/>
            <person name="Nantel A."/>
            <person name="Magee P.T."/>
        </authorList>
    </citation>
    <scope>GENOME REANNOTATION</scope>
    <source>
        <strain>SC5314 / ATCC MYA-2876</strain>
    </source>
</reference>
<reference key="3">
    <citation type="journal article" date="2013" name="Genome Biol.">
        <title>Assembly of a phased diploid Candida albicans genome facilitates allele-specific measurements and provides a simple model for repeat and indel structure.</title>
        <authorList>
            <person name="Muzzey D."/>
            <person name="Schwartz K."/>
            <person name="Weissman J.S."/>
            <person name="Sherlock G."/>
        </authorList>
    </citation>
    <scope>NUCLEOTIDE SEQUENCE [LARGE SCALE GENOMIC DNA]</scope>
    <scope>GENOME REANNOTATION</scope>
    <source>
        <strain>SC5314 / ATCC MYA-2876</strain>
    </source>
</reference>
<reference key="4">
    <citation type="journal article" date="2003" name="Yeast">
        <title>Genome-wide identification of fungal GPI proteins.</title>
        <authorList>
            <person name="De Groot P.W."/>
            <person name="Hellingwerf K.J."/>
            <person name="Klis F.M."/>
        </authorList>
    </citation>
    <scope>PREDICTION OF GPI-ANCHOR</scope>
</reference>
<reference key="5">
    <citation type="journal article" date="2004" name="Yeast">
        <title>Identification of potential cell-surface proteins in Candida albicans and investigation of the role of a putative cell-surface glycosidase in adhesion and virulence.</title>
        <authorList>
            <person name="Alberti-Segui C."/>
            <person name="Morales A.J."/>
            <person name="Xing H."/>
            <person name="Kessler M.M."/>
            <person name="Willins D.A."/>
            <person name="Weinstock K.G."/>
            <person name="Cottarel G."/>
            <person name="Fechtel K."/>
            <person name="Rogers B."/>
        </authorList>
    </citation>
    <scope>FUNCTION</scope>
    <scope>DISRUPTION PHENOTYPE</scope>
</reference>
<reference key="6">
    <citation type="journal article" date="2006" name="J. Biol. Chem.">
        <title>The CRH family coding for cell wall glycosylphosphatidylinositol proteins with a predicted transglycosidase domain affects cell wall organization and virulence of Candida albicans.</title>
        <authorList>
            <person name="Pardini G."/>
            <person name="De Groot P.W."/>
            <person name="Coste A.T."/>
            <person name="Karababa M."/>
            <person name="Klis F.M."/>
            <person name="de Koster C.G."/>
            <person name="Sanglard D."/>
        </authorList>
    </citation>
    <scope>DISRUPTION PHENOTYPE</scope>
    <scope>INDUCTION</scope>
    <scope>FUNCTION</scope>
</reference>
<reference key="7">
    <citation type="journal article" date="2006" name="Fungal Genet. Biol.">
        <title>Genomic response programs of Candida albicans following protoplasting and regeneration.</title>
        <authorList>
            <person name="Castillo L."/>
            <person name="Martinez A.I."/>
            <person name="Garcera A."/>
            <person name="Garcia-Martinez J."/>
            <person name="Ruiz-Herrera J."/>
            <person name="Valentin E."/>
            <person name="Sentandreu R."/>
        </authorList>
    </citation>
    <scope>IDENTIFICATION BY MASS SPECTROMETRY</scope>
    <scope>SUBCELLULAR LOCATION</scope>
    <scope>INDUCTION</scope>
</reference>
<reference key="8">
    <citation type="journal article" date="2008" name="Microbiology">
        <title>Hypoxic conditions and iron restriction affect the cell-wall proteome of Candida albicans grown under vagina-simulative conditions.</title>
        <authorList>
            <person name="Sosinska G.J."/>
            <person name="de Groot P.W."/>
            <person name="Teixeira de Mattos M.J."/>
            <person name="Dekker H.L."/>
            <person name="de Koster C.G."/>
            <person name="Hellingwerf K.J."/>
            <person name="Klis F.M."/>
        </authorList>
    </citation>
    <scope>IDENTIFICATION BY MASS SPECTROMETRY</scope>
    <scope>SUBCELLULAR LOCATION</scope>
    <scope>INDUCTION</scope>
</reference>
<reference key="9">
    <citation type="journal article" date="2008" name="Proteomics">
        <title>A study of the Candida albicans cell wall proteome.</title>
        <authorList>
            <person name="Castillo L."/>
            <person name="Calvo E."/>
            <person name="Martinez A.I."/>
            <person name="Ruiz-Herrera J."/>
            <person name="Valentin E."/>
            <person name="Lopez J.A."/>
            <person name="Sentandreu R."/>
        </authorList>
    </citation>
    <scope>IDENTIFICATION BY MASS SPECTROMETRY</scope>
    <scope>SUBCELLULAR LOCATION</scope>
</reference>
<reference key="10">
    <citation type="journal article" date="2010" name="Jpn. J. Infect. Dis.">
        <title>Micafungin alters the expression of genes related to cell wall integrity in Candida albicans biofilms.</title>
        <authorList>
            <person name="Kaneko Y."/>
            <person name="Ohno H."/>
            <person name="Kohno S."/>
            <person name="Miyazaki Y."/>
        </authorList>
    </citation>
    <scope>INDUCTION</scope>
</reference>
<reference key="11">
    <citation type="journal article" date="2010" name="PLoS Pathog.">
        <title>Serological profiling of a Candida albicans protein microarray reveals permanent host-pathogen interplay and stage-specific responses during candidemia.</title>
        <authorList>
            <person name="Mochon A.B."/>
            <person name="Jin Y."/>
            <person name="Kayala M.A."/>
            <person name="Wingard J.R."/>
            <person name="Clancy C.J."/>
            <person name="Nguyen M.H."/>
            <person name="Felgner P."/>
            <person name="Baldi P."/>
            <person name="Liu H."/>
        </authorList>
    </citation>
    <scope>FUNCTION</scope>
</reference>
<reference key="12">
    <citation type="journal article" date="2010" name="Yeast">
        <title>Mass spectrometric analysis of the secretome of Candida albicans.</title>
        <authorList>
            <person name="Sorgo A.G."/>
            <person name="Heilmann C.J."/>
            <person name="Dekker H.L."/>
            <person name="Brul S."/>
            <person name="de Koster C.G."/>
            <person name="Klis F.M."/>
        </authorList>
    </citation>
    <scope>IDENTIFICATION BY MASS SPECTROMETRY</scope>
    <scope>SUBCELLULAR LOCATION</scope>
</reference>
<reference key="13">
    <citation type="journal article" date="2011" name="Eukaryot. Cell">
        <title>Effects of fluconazole on the secretome, the wall proteome, and wall integrity of the clinical fungus Candida albicans.</title>
        <authorList>
            <person name="Sorgo A.G."/>
            <person name="Heilmann C.J."/>
            <person name="Dekker H.L."/>
            <person name="Bekker M."/>
            <person name="Brul S."/>
            <person name="de Koster C.G."/>
            <person name="de Koning L.J."/>
            <person name="Klis F.M."/>
        </authorList>
    </citation>
    <scope>INDUCTION</scope>
</reference>
<reference key="14">
    <citation type="journal article" date="2011" name="Microbiology">
        <title>Mass spectrometric quantification of the adaptations in the wall proteome of Candida albicans in response to ambient pH.</title>
        <authorList>
            <person name="Sosinska G.J."/>
            <person name="de Koning L.J."/>
            <person name="de Groot P.W."/>
            <person name="Manders E.M."/>
            <person name="Dekker H.L."/>
            <person name="Hellingwerf K.J."/>
            <person name="de Koster C.G."/>
            <person name="Klis F.M."/>
        </authorList>
    </citation>
    <scope>IDENTIFICATION BY MASS SPECTROMETRY</scope>
    <scope>SUBCELLULAR LOCATION</scope>
    <scope>INDUCTION</scope>
</reference>
<reference key="15">
    <citation type="journal article" date="2011" name="Microbiology">
        <title>Hyphal induction in the human fungal pathogen Candida albicans reveals a characteristic wall protein profile.</title>
        <authorList>
            <person name="Heilmann C.J."/>
            <person name="Sorgo A.G."/>
            <person name="Siliakus A.R."/>
            <person name="Dekker H.L."/>
            <person name="Brul S."/>
            <person name="de Koster C.G."/>
            <person name="de Koning L.J."/>
            <person name="Klis F.M."/>
        </authorList>
    </citation>
    <scope>IDENTIFICATION BY MASS SPECTROMETRY</scope>
    <scope>SUBCELLULAR LOCATION</scope>
    <scope>INDUCTION</scope>
</reference>
<reference key="16">
    <citation type="journal article" date="2012" name="Biochem. J.">
        <title>The Candida albicans plasma membrane protein Rch1p, a member of the vertebrate SLC10 carrier family, is a novel regulator of cytosolic Ca2+ homoeostasis.</title>
        <authorList>
            <person name="Jiang L."/>
            <person name="Alber J."/>
            <person name="Wang J."/>
            <person name="Du W."/>
            <person name="Yang X."/>
            <person name="Li X."/>
            <person name="Sanglard D."/>
            <person name="Geyer J."/>
        </authorList>
    </citation>
    <scope>INDUCTION</scope>
</reference>
<reference key="17">
    <citation type="journal article" date="2012" name="FEMS Yeast Res.">
        <title>Candida albicans Msi3p, a homolog of the Saccharomyces cerevisiae Sse1p of the Hsp70 family, is involved in cell growth and fluconazole tolerance.</title>
        <authorList>
            <person name="Nagao J."/>
            <person name="Cho T."/>
            <person name="Uno J."/>
            <person name="Ueno K."/>
            <person name="Imayoshi R."/>
            <person name="Nakayama H."/>
            <person name="Chibana H."/>
            <person name="Kaminishi H."/>
        </authorList>
    </citation>
    <scope>INDUCTION</scope>
</reference>
<reference key="18">
    <citation type="journal article" date="2013" name="Eukaryot. Cell">
        <title>Surface stress induces a conserved cell wall stress response in the pathogenic fungus Candida albicans.</title>
        <authorList>
            <person name="Heilmann C.J."/>
            <person name="Sorgo A.G."/>
            <person name="Mohammadi S."/>
            <person name="Sosinska G.J."/>
            <person name="de Koster C.G."/>
            <person name="Brul S."/>
            <person name="de Koning L.J."/>
            <person name="Klis F.M."/>
        </authorList>
    </citation>
    <scope>IDENTIFICATION BY MASS SPECTROMETRY</scope>
    <scope>SUBCELLULAR LOCATION</scope>
    <scope>INDUCTION</scope>
</reference>
<name>UTR2_CANAL</name>
<gene>
    <name evidence="21" type="primary">UTR2</name>
    <name evidence="20" type="synonym">CSF4</name>
    <name type="ordered locus">CAALFM_C301730CA</name>
    <name type="ORF">CaO19.1671</name>
    <name type="ORF">CaO19.9240</name>
</gene>
<accession>Q5AJC0</accession>
<accession>A0A1D8PJ91</accession>
<proteinExistence type="evidence at protein level"/>
<keyword id="KW-0134">Cell wall</keyword>
<keyword id="KW-0961">Cell wall biogenesis/degradation</keyword>
<keyword id="KW-1015">Disulfide bond</keyword>
<keyword id="KW-0325">Glycoprotein</keyword>
<keyword id="KW-0326">Glycosidase</keyword>
<keyword id="KW-0328">Glycosyltransferase</keyword>
<keyword id="KW-0336">GPI-anchor</keyword>
<keyword id="KW-0378">Hydrolase</keyword>
<keyword id="KW-0449">Lipoprotein</keyword>
<keyword id="KW-0472">Membrane</keyword>
<keyword id="KW-1185">Reference proteome</keyword>
<keyword id="KW-0964">Secreted</keyword>
<keyword id="KW-0732">Signal</keyword>
<keyword id="KW-0808">Transferase</keyword>
<keyword id="KW-0843">Virulence</keyword>
<feature type="signal peptide" evidence="3">
    <location>
        <begin position="1"/>
        <end position="23"/>
    </location>
</feature>
<feature type="chain" id="PRO_0000424857" description="Crh-like protein UTR2">
    <location>
        <begin position="24"/>
        <end position="440"/>
    </location>
</feature>
<feature type="propeptide" id="PRO_0000424858" description="Removed in mature form" evidence="3">
    <location>
        <begin position="441"/>
        <end position="470"/>
    </location>
</feature>
<feature type="domain" description="GH16" evidence="4">
    <location>
        <begin position="95"/>
        <end position="282"/>
    </location>
</feature>
<feature type="region of interest" description="Disordered" evidence="5">
    <location>
        <begin position="347"/>
        <end position="446"/>
    </location>
</feature>
<feature type="compositionally biased region" description="Low complexity" evidence="5">
    <location>
        <begin position="370"/>
        <end position="384"/>
    </location>
</feature>
<feature type="compositionally biased region" description="Low complexity" evidence="5">
    <location>
        <begin position="392"/>
        <end position="408"/>
    </location>
</feature>
<feature type="compositionally biased region" description="Polar residues" evidence="5">
    <location>
        <begin position="409"/>
        <end position="418"/>
    </location>
</feature>
<feature type="compositionally biased region" description="Low complexity" evidence="5">
    <location>
        <begin position="433"/>
        <end position="446"/>
    </location>
</feature>
<feature type="active site" description="Nucleophile" evidence="1">
    <location>
        <position position="168"/>
    </location>
</feature>
<feature type="active site" description="Proton donor" evidence="1">
    <location>
        <position position="172"/>
    </location>
</feature>
<feature type="binding site" evidence="2">
    <location>
        <position position="172"/>
    </location>
    <ligand>
        <name>chitin</name>
        <dbReference type="ChEBI" id="CHEBI:17029"/>
    </ligand>
</feature>
<feature type="binding site" evidence="2">
    <location>
        <position position="259"/>
    </location>
    <ligand>
        <name>chitin</name>
        <dbReference type="ChEBI" id="CHEBI:17029"/>
    </ligand>
</feature>
<feature type="binding site" evidence="2">
    <location>
        <position position="270"/>
    </location>
    <ligand>
        <name>chitin</name>
        <dbReference type="ChEBI" id="CHEBI:17029"/>
    </ligand>
</feature>
<feature type="lipid moiety-binding region" description="GPI-anchor amidated serine" evidence="3">
    <location>
        <position position="440"/>
    </location>
</feature>
<feature type="glycosylation site" description="N-linked (GlcNAc...) asparagine" evidence="3">
    <location>
        <position position="65"/>
    </location>
</feature>
<feature type="glycosylation site" description="N-linked (GlcNAc...) asparagine" evidence="3">
    <location>
        <position position="100"/>
    </location>
</feature>
<feature type="glycosylation site" description="N-linked (GlcNAc...) asparagine" evidence="3">
    <location>
        <position position="125"/>
    </location>
</feature>
<feature type="glycosylation site" description="N-linked (GlcNAc...) asparagine" evidence="3">
    <location>
        <position position="177"/>
    </location>
</feature>
<feature type="glycosylation site" description="N-linked (GlcNAc...) asparagine" evidence="3">
    <location>
        <position position="194"/>
    </location>
</feature>
<feature type="glycosylation site" description="N-linked (GlcNAc...) asparagine" evidence="3">
    <location>
        <position position="198"/>
    </location>
</feature>
<feature type="glycosylation site" description="N-linked (GlcNAc...) asparagine" evidence="3">
    <location>
        <position position="202"/>
    </location>
</feature>
<feature type="glycosylation site" description="N-linked (GlcNAc...) asparagine" evidence="3">
    <location>
        <position position="235"/>
    </location>
</feature>
<feature type="glycosylation site" description="N-linked (GlcNAc...) asparagine" evidence="3">
    <location>
        <position position="239"/>
    </location>
</feature>
<feature type="glycosylation site" description="N-linked (GlcNAc...) asparagine" evidence="3">
    <location>
        <position position="314"/>
    </location>
</feature>
<feature type="glycosylation site" description="N-linked (GlcNAc...) asparagine" evidence="3">
    <location>
        <position position="327"/>
    </location>
</feature>
<feature type="glycosylation site" description="N-linked (GlcNAc...) asparagine" evidence="3">
    <location>
        <position position="450"/>
    </location>
</feature>
<feature type="disulfide bond" evidence="2">
    <location>
        <begin position="58"/>
        <end position="69"/>
    </location>
</feature>
<organism>
    <name type="scientific">Candida albicans (strain SC5314 / ATCC MYA-2876)</name>
    <name type="common">Yeast</name>
    <dbReference type="NCBI Taxonomy" id="237561"/>
    <lineage>
        <taxon>Eukaryota</taxon>
        <taxon>Fungi</taxon>
        <taxon>Dikarya</taxon>
        <taxon>Ascomycota</taxon>
        <taxon>Saccharomycotina</taxon>
        <taxon>Pichiomycetes</taxon>
        <taxon>Debaryomycetaceae</taxon>
        <taxon>Candida/Lodderomyces clade</taxon>
        <taxon>Candida</taxon>
    </lineage>
</organism>
<comment type="function">
    <text evidence="2 6 8 11">Dual chitinase/transglycosylase that plays a role in cell wall architecture (By similarity). Chitinase and transglycosylase activities are coupled (By similarity). Required for the polysaccharide cross-linking at the septa and the cell wall (By similarity). More specifically, transfers chitin to 1,6-beta-glucan in the cell wall (By similarity). Plays an important role in fungal pathogenesis via its functions in cell wall assembly and regeneration, filamentation, and adherence to host cells (PubMed:15042589, PubMed:17074760, PubMed:20361054). Acts as a cell surface antigen in acute candidemia patients (PubMed:20361054).</text>
</comment>
<comment type="catalytic activity">
    <reaction evidence="2">
        <text>Random endo-hydrolysis of N-acetyl-beta-D-glucosaminide (1-&gt;4)-beta-linkages in chitin and chitodextrins.</text>
        <dbReference type="EC" id="3.2.1.14"/>
    </reaction>
</comment>
<comment type="subcellular location">
    <subcellularLocation>
        <location evidence="7 9 10 12 14 15 19">Secreted</location>
        <location evidence="7 9 10 12 14 15 19">Cell wall</location>
    </subcellularLocation>
    <subcellularLocation>
        <location evidence="3">Membrane</location>
        <topology evidence="3">Lipid-anchor</topology>
        <topology evidence="3">GPI-anchor</topology>
    </subcellularLocation>
    <text evidence="3">Covalently-linked GPI-modified cell wall protein (GPI-CWP).</text>
</comment>
<comment type="induction">
    <text evidence="7 8 9 13 14 15 16 17 18 19">Up-regulated by heat stress, calcineurin, micafungin, and fluconazole. Protein abundance is increased at pH 4 compared to pH 7. Expression is also regulated by RCH1.</text>
</comment>
<comment type="PTM">
    <text evidence="22">The GPI-anchor is attached to the protein in the endoplasmic reticulum and serves to target the protein to the cell surface. There, the glucosamine-inositol phospholipid moiety is cleaved off and the GPI-modified mannoprotein is covalently attached via its lipidless GPI glycan remnant to the 1,6-beta-glucan of the outer cell wall layer.</text>
</comment>
<comment type="disruption phenotype">
    <text evidence="6 8">Leads to increased susceptibility to cell wall-perturbing agents, defect in filamentation, reduction in adherence to mammalian cells in an in vitro adhesion assay, and a prolongation of survival in an immunocompetent mouse model of disseminated candidiasis.</text>
</comment>
<comment type="similarity">
    <text evidence="22">Belongs to the glycosyl hydrolase 16 family. CRH1 subfamily.</text>
</comment>
<protein>
    <recommendedName>
        <fullName evidence="21">Crh-like protein UTR2</fullName>
    </recommendedName>
    <alternativeName>
        <fullName evidence="20">Cell-surface factor 4</fullName>
    </alternativeName>
    <domain>
        <recommendedName>
            <fullName evidence="2">Chitinase UTR2</fullName>
            <ecNumber evidence="2">3.2.1.14</ecNumber>
        </recommendedName>
    </domain>
    <domain>
        <recommendedName>
            <fullName evidence="2">Chitin transglycosylase UTR2</fullName>
            <ecNumber evidence="2">2.4.-.-</ecNumber>
        </recommendedName>
    </domain>
</protein>